<protein>
    <recommendedName>
        <fullName>NAD(P) transhydrogenase subunit alpha</fullName>
        <ecNumber evidence="2">7.1.1.1</ecNumber>
    </recommendedName>
    <alternativeName>
        <fullName>Nicotinamide nucleotide transhydrogenase subunit alpha</fullName>
    </alternativeName>
    <alternativeName>
        <fullName>Pyridine nucleotide transhydrogenase subunit alpha</fullName>
    </alternativeName>
</protein>
<accession>P43842</accession>
<feature type="chain" id="PRO_0000199018" description="NAD(P) transhydrogenase subunit alpha">
    <location>
        <begin position="1"/>
        <end position="512"/>
    </location>
</feature>
<feature type="topological domain" description="Cytoplasmic" evidence="3">
    <location>
        <begin position="1"/>
        <end position="400"/>
    </location>
</feature>
<feature type="transmembrane region" description="Helical" evidence="3">
    <location>
        <begin position="401"/>
        <end position="421"/>
    </location>
</feature>
<feature type="transmembrane region" description="Helical" evidence="3">
    <location>
        <begin position="422"/>
        <end position="442"/>
    </location>
</feature>
<feature type="topological domain" description="Cytoplasmic" evidence="3">
    <location>
        <begin position="443"/>
        <end position="451"/>
    </location>
</feature>
<feature type="transmembrane region" description="Helical" evidence="3">
    <location>
        <begin position="452"/>
        <end position="472"/>
    </location>
</feature>
<feature type="topological domain" description="Periplasmic" evidence="3">
    <location>
        <begin position="473"/>
        <end position="478"/>
    </location>
</feature>
<feature type="transmembrane region" description="Helical" evidence="3">
    <location>
        <begin position="479"/>
        <end position="499"/>
    </location>
</feature>
<feature type="topological domain" description="Cytoplasmic" evidence="3">
    <location>
        <begin position="500"/>
        <end position="512"/>
    </location>
</feature>
<feature type="region of interest" description="Disordered" evidence="4">
    <location>
        <begin position="375"/>
        <end position="394"/>
    </location>
</feature>
<feature type="binding site" evidence="1">
    <location>
        <begin position="125"/>
        <end position="128"/>
    </location>
    <ligand>
        <name>NAD(+)</name>
        <dbReference type="ChEBI" id="CHEBI:57540"/>
    </ligand>
</feature>
<feature type="binding site" evidence="1">
    <location>
        <position position="175"/>
    </location>
    <ligand>
        <name>NAD(+)</name>
        <dbReference type="ChEBI" id="CHEBI:57540"/>
    </ligand>
</feature>
<feature type="binding site" evidence="1">
    <location>
        <begin position="195"/>
        <end position="197"/>
    </location>
    <ligand>
        <name>NAD(+)</name>
        <dbReference type="ChEBI" id="CHEBI:57540"/>
    </ligand>
</feature>
<feature type="binding site" evidence="1">
    <location>
        <position position="225"/>
    </location>
    <ligand>
        <name>NAD(+)</name>
        <dbReference type="ChEBI" id="CHEBI:57540"/>
    </ligand>
</feature>
<comment type="function">
    <text evidence="1">The transhydrogenation between NADH and NADP is coupled to respiration and ATP hydrolysis and functions as a proton pump across the membrane.</text>
</comment>
<comment type="catalytic activity">
    <reaction evidence="2">
        <text>NAD(+) + NADPH + H(+)(in) = NADH + NADP(+) + H(+)(out)</text>
        <dbReference type="Rhea" id="RHEA:47992"/>
        <dbReference type="ChEBI" id="CHEBI:15378"/>
        <dbReference type="ChEBI" id="CHEBI:57540"/>
        <dbReference type="ChEBI" id="CHEBI:57783"/>
        <dbReference type="ChEBI" id="CHEBI:57945"/>
        <dbReference type="ChEBI" id="CHEBI:58349"/>
        <dbReference type="EC" id="7.1.1.1"/>
    </reaction>
</comment>
<comment type="subunit">
    <text evidence="1">Heterodimer of an alpha (PntA) and a beta (PntB) chain.</text>
</comment>
<comment type="subcellular location">
    <subcellularLocation>
        <location evidence="1">Cell inner membrane</location>
        <topology evidence="1">Multi-pass membrane protein</topology>
    </subcellularLocation>
</comment>
<comment type="similarity">
    <text evidence="5">Belongs to the AlaDH/PNT family.</text>
</comment>
<name>PNTA_HAEIN</name>
<gene>
    <name type="primary">pntA</name>
    <name type="ordered locus">HI_1362</name>
</gene>
<evidence type="ECO:0000250" key="1"/>
<evidence type="ECO:0000250" key="2">
    <source>
        <dbReference type="UniProtKB" id="P07001"/>
    </source>
</evidence>
<evidence type="ECO:0000255" key="3"/>
<evidence type="ECO:0000256" key="4">
    <source>
        <dbReference type="SAM" id="MobiDB-lite"/>
    </source>
</evidence>
<evidence type="ECO:0000305" key="5"/>
<dbReference type="EC" id="7.1.1.1" evidence="2"/>
<dbReference type="EMBL" id="L42023">
    <property type="protein sequence ID" value="AAC23009.1"/>
    <property type="molecule type" value="Genomic_DNA"/>
</dbReference>
<dbReference type="PIR" id="E64119">
    <property type="entry name" value="E64119"/>
</dbReference>
<dbReference type="RefSeq" id="NP_439513.1">
    <property type="nucleotide sequence ID" value="NC_000907.1"/>
</dbReference>
<dbReference type="SMR" id="P43842"/>
<dbReference type="STRING" id="71421.HI_1362"/>
<dbReference type="EnsemblBacteria" id="AAC23009">
    <property type="protein sequence ID" value="AAC23009"/>
    <property type="gene ID" value="HI_1362"/>
</dbReference>
<dbReference type="KEGG" id="hin:HI_1362"/>
<dbReference type="PATRIC" id="fig|71421.8.peg.1416"/>
<dbReference type="eggNOG" id="COG3288">
    <property type="taxonomic scope" value="Bacteria"/>
</dbReference>
<dbReference type="HOGENOM" id="CLU_003376_2_1_6"/>
<dbReference type="OrthoDB" id="9804592at2"/>
<dbReference type="PhylomeDB" id="P43842"/>
<dbReference type="BioCyc" id="HINF71421:G1GJ1-1387-MONOMER"/>
<dbReference type="Proteomes" id="UP000000579">
    <property type="component" value="Chromosome"/>
</dbReference>
<dbReference type="GO" id="GO:0005886">
    <property type="term" value="C:plasma membrane"/>
    <property type="evidence" value="ECO:0000250"/>
    <property type="project" value="UniProtKB"/>
</dbReference>
<dbReference type="GO" id="GO:0050661">
    <property type="term" value="F:NADP binding"/>
    <property type="evidence" value="ECO:0000250"/>
    <property type="project" value="UniProtKB"/>
</dbReference>
<dbReference type="GO" id="GO:0016491">
    <property type="term" value="F:oxidoreductase activity"/>
    <property type="evidence" value="ECO:0007669"/>
    <property type="project" value="InterPro"/>
</dbReference>
<dbReference type="GO" id="GO:0046983">
    <property type="term" value="F:protein dimerization activity"/>
    <property type="evidence" value="ECO:0000250"/>
    <property type="project" value="UniProtKB"/>
</dbReference>
<dbReference type="GO" id="GO:0008750">
    <property type="term" value="F:proton-translocating NAD(P)+ transhydrogenase activity"/>
    <property type="evidence" value="ECO:0007669"/>
    <property type="project" value="UniProtKB-EC"/>
</dbReference>
<dbReference type="GO" id="GO:0006740">
    <property type="term" value="P:NADPH regeneration"/>
    <property type="evidence" value="ECO:0000318"/>
    <property type="project" value="GO_Central"/>
</dbReference>
<dbReference type="CDD" id="cd05304">
    <property type="entry name" value="Rubrum_tdh"/>
    <property type="match status" value="1"/>
</dbReference>
<dbReference type="FunFam" id="3.40.50.720:FF:000028">
    <property type="entry name" value="NAD(P) transhydrogenase subunit alpha"/>
    <property type="match status" value="1"/>
</dbReference>
<dbReference type="FunFam" id="3.40.50.720:FF:000063">
    <property type="entry name" value="NAD(P) transhydrogenase subunit alpha"/>
    <property type="match status" value="1"/>
</dbReference>
<dbReference type="Gene3D" id="3.40.50.720">
    <property type="entry name" value="NAD(P)-binding Rossmann-like Domain"/>
    <property type="match status" value="2"/>
</dbReference>
<dbReference type="InterPro" id="IPR008143">
    <property type="entry name" value="Ala_DH/PNT_CS2"/>
</dbReference>
<dbReference type="InterPro" id="IPR008142">
    <property type="entry name" value="AlaDH/PNT_CS1"/>
</dbReference>
<dbReference type="InterPro" id="IPR007886">
    <property type="entry name" value="AlaDH/PNT_N"/>
</dbReference>
<dbReference type="InterPro" id="IPR007698">
    <property type="entry name" value="AlaDH/PNT_NAD(H)-bd"/>
</dbReference>
<dbReference type="InterPro" id="IPR036291">
    <property type="entry name" value="NAD(P)-bd_dom_sf"/>
</dbReference>
<dbReference type="InterPro" id="IPR026255">
    <property type="entry name" value="NADP_transhyd_a"/>
</dbReference>
<dbReference type="InterPro" id="IPR024605">
    <property type="entry name" value="NADP_transhyd_a_C"/>
</dbReference>
<dbReference type="NCBIfam" id="TIGR00561">
    <property type="entry name" value="pntA"/>
    <property type="match status" value="1"/>
</dbReference>
<dbReference type="NCBIfam" id="NF006942">
    <property type="entry name" value="PRK09424.1"/>
    <property type="match status" value="1"/>
</dbReference>
<dbReference type="PANTHER" id="PTHR10160">
    <property type="entry name" value="NAD(P) TRANSHYDROGENASE"/>
    <property type="match status" value="1"/>
</dbReference>
<dbReference type="PANTHER" id="PTHR10160:SF19">
    <property type="entry name" value="PROTON-TRANSLOCATING NAD(P)(+) TRANSHYDROGENASE"/>
    <property type="match status" value="1"/>
</dbReference>
<dbReference type="Pfam" id="PF01262">
    <property type="entry name" value="AlaDh_PNT_C"/>
    <property type="match status" value="1"/>
</dbReference>
<dbReference type="Pfam" id="PF05222">
    <property type="entry name" value="AlaDh_PNT_N"/>
    <property type="match status" value="1"/>
</dbReference>
<dbReference type="Pfam" id="PF12769">
    <property type="entry name" value="PNTB_4TM"/>
    <property type="match status" value="1"/>
</dbReference>
<dbReference type="PIRSF" id="PIRSF000203">
    <property type="entry name" value="NADP_transhydrogenase_alpha"/>
    <property type="match status" value="1"/>
</dbReference>
<dbReference type="SMART" id="SM01002">
    <property type="entry name" value="AlaDh_PNT_C"/>
    <property type="match status" value="1"/>
</dbReference>
<dbReference type="SMART" id="SM01003">
    <property type="entry name" value="AlaDh_PNT_N"/>
    <property type="match status" value="1"/>
</dbReference>
<dbReference type="SUPFAM" id="SSF52283">
    <property type="entry name" value="Formate/glycerate dehydrogenase catalytic domain-like"/>
    <property type="match status" value="1"/>
</dbReference>
<dbReference type="SUPFAM" id="SSF51735">
    <property type="entry name" value="NAD(P)-binding Rossmann-fold domains"/>
    <property type="match status" value="1"/>
</dbReference>
<dbReference type="PROSITE" id="PS00836">
    <property type="entry name" value="ALADH_PNT_1"/>
    <property type="match status" value="1"/>
</dbReference>
<dbReference type="PROSITE" id="PS00837">
    <property type="entry name" value="ALADH_PNT_2"/>
    <property type="match status" value="1"/>
</dbReference>
<sequence>MLIGVPRELLENESRVAATPKTVQQILKLGFDVIVEHDAGFKASFEDQAFLEAGAKIGTSAEIWQSDIIFKVNAPTDEEIAQMKEGAALVSFIWRMQNPELMKKLTAKKINVLAMDAVPRISRAQALDALSSMANISGYRAVIEAAHEFGSFFTGQITAAGKVPPAKVLVIGAGVAGLAAIGAANSLGAIVRAFDSRPEVKEQVQSMGASFLEIDFKEEGGSGDGYAKVMSEEFNRRAMELYAEQAKEVDIIITTAAIPGKPAPRLITKEMVDSMKPGSVIVDLAAATGGNCEYTQAGKVVTTENQVKVIGYTDFPSRLPTQSSQLYGTNLVNLLKLLCKEKDGNINIDFEDVVLRGVTVVRDGEEIPPAQIQVSAQPKQETKAAPVAEKKESKPTDPRVKYGVMAGVGVLFLWLASVAPAAFLSHFTVFVLACVVGYYVVWNVSHALHTPLMAVTNAISGIIIVGALLQIRQPTGNLFIDALAFVAILVASINIFGGFRVTQRMLAMFRKG</sequence>
<keyword id="KW-0997">Cell inner membrane</keyword>
<keyword id="KW-1003">Cell membrane</keyword>
<keyword id="KW-0472">Membrane</keyword>
<keyword id="KW-0520">NAD</keyword>
<keyword id="KW-0521">NADP</keyword>
<keyword id="KW-0547">Nucleotide-binding</keyword>
<keyword id="KW-1185">Reference proteome</keyword>
<keyword id="KW-1278">Translocase</keyword>
<keyword id="KW-0812">Transmembrane</keyword>
<keyword id="KW-1133">Transmembrane helix</keyword>
<organism>
    <name type="scientific">Haemophilus influenzae (strain ATCC 51907 / DSM 11121 / KW20 / Rd)</name>
    <dbReference type="NCBI Taxonomy" id="71421"/>
    <lineage>
        <taxon>Bacteria</taxon>
        <taxon>Pseudomonadati</taxon>
        <taxon>Pseudomonadota</taxon>
        <taxon>Gammaproteobacteria</taxon>
        <taxon>Pasteurellales</taxon>
        <taxon>Pasteurellaceae</taxon>
        <taxon>Haemophilus</taxon>
    </lineage>
</organism>
<proteinExistence type="inferred from homology"/>
<reference key="1">
    <citation type="journal article" date="1995" name="Science">
        <title>Whole-genome random sequencing and assembly of Haemophilus influenzae Rd.</title>
        <authorList>
            <person name="Fleischmann R.D."/>
            <person name="Adams M.D."/>
            <person name="White O."/>
            <person name="Clayton R.A."/>
            <person name="Kirkness E.F."/>
            <person name="Kerlavage A.R."/>
            <person name="Bult C.J."/>
            <person name="Tomb J.-F."/>
            <person name="Dougherty B.A."/>
            <person name="Merrick J.M."/>
            <person name="McKenney K."/>
            <person name="Sutton G.G."/>
            <person name="FitzHugh W."/>
            <person name="Fields C.A."/>
            <person name="Gocayne J.D."/>
            <person name="Scott J.D."/>
            <person name="Shirley R."/>
            <person name="Liu L.-I."/>
            <person name="Glodek A."/>
            <person name="Kelley J.M."/>
            <person name="Weidman J.F."/>
            <person name="Phillips C.A."/>
            <person name="Spriggs T."/>
            <person name="Hedblom E."/>
            <person name="Cotton M.D."/>
            <person name="Utterback T.R."/>
            <person name="Hanna M.C."/>
            <person name="Nguyen D.T."/>
            <person name="Saudek D.M."/>
            <person name="Brandon R.C."/>
            <person name="Fine L.D."/>
            <person name="Fritchman J.L."/>
            <person name="Fuhrmann J.L."/>
            <person name="Geoghagen N.S.M."/>
            <person name="Gnehm C.L."/>
            <person name="McDonald L.A."/>
            <person name="Small K.V."/>
            <person name="Fraser C.M."/>
            <person name="Smith H.O."/>
            <person name="Venter J.C."/>
        </authorList>
    </citation>
    <scope>NUCLEOTIDE SEQUENCE [LARGE SCALE GENOMIC DNA]</scope>
    <source>
        <strain>ATCC 51907 / DSM 11121 / KW20 / Rd</strain>
    </source>
</reference>